<proteinExistence type="inferred from homology"/>
<feature type="chain" id="PRO_0000269537" description="Pyrimidine-nucleoside phosphorylase">
    <location>
        <begin position="1"/>
        <end position="433"/>
    </location>
</feature>
<feature type="binding site" evidence="1">
    <location>
        <begin position="81"/>
        <end position="83"/>
    </location>
    <ligand>
        <name>phosphate</name>
        <dbReference type="ChEBI" id="CHEBI:43474"/>
    </ligand>
</feature>
<feature type="binding site" evidence="1">
    <location>
        <position position="88"/>
    </location>
    <ligand>
        <name>K(+)</name>
        <dbReference type="ChEBI" id="CHEBI:29103"/>
    </ligand>
</feature>
<feature type="binding site" evidence="1">
    <location>
        <position position="90"/>
    </location>
    <ligand>
        <name>K(+)</name>
        <dbReference type="ChEBI" id="CHEBI:29103"/>
    </ligand>
</feature>
<feature type="binding site" evidence="1">
    <location>
        <position position="92"/>
    </location>
    <ligand>
        <name>phosphate</name>
        <dbReference type="ChEBI" id="CHEBI:43474"/>
    </ligand>
</feature>
<feature type="binding site" evidence="1">
    <location>
        <begin position="108"/>
        <end position="110"/>
    </location>
    <ligand>
        <name>phosphate</name>
        <dbReference type="ChEBI" id="CHEBI:43474"/>
    </ligand>
</feature>
<feature type="binding site" evidence="1">
    <location>
        <position position="120"/>
    </location>
    <ligand>
        <name>phosphate</name>
        <dbReference type="ChEBI" id="CHEBI:43474"/>
    </ligand>
</feature>
<feature type="binding site" evidence="1">
    <location>
        <position position="168"/>
    </location>
    <ligand>
        <name>substrate</name>
    </ligand>
</feature>
<feature type="binding site" evidence="1">
    <location>
        <position position="187"/>
    </location>
    <ligand>
        <name>substrate</name>
    </ligand>
</feature>
<feature type="binding site" evidence="1">
    <location>
        <position position="243"/>
    </location>
    <ligand>
        <name>K(+)</name>
        <dbReference type="ChEBI" id="CHEBI:29103"/>
    </ligand>
</feature>
<feature type="binding site" evidence="1">
    <location>
        <position position="246"/>
    </location>
    <ligand>
        <name>K(+)</name>
        <dbReference type="ChEBI" id="CHEBI:29103"/>
    </ligand>
</feature>
<feature type="binding site" evidence="1">
    <location>
        <position position="255"/>
    </location>
    <ligand>
        <name>K(+)</name>
        <dbReference type="ChEBI" id="CHEBI:29103"/>
    </ligand>
</feature>
<name>PDP_STAAS</name>
<dbReference type="EC" id="2.4.2.2"/>
<dbReference type="EMBL" id="BX571857">
    <property type="protein sequence ID" value="CAG43847.1"/>
    <property type="molecule type" value="Genomic_DNA"/>
</dbReference>
<dbReference type="RefSeq" id="WP_001242310.1">
    <property type="nucleotide sequence ID" value="NC_002953.3"/>
</dbReference>
<dbReference type="SMR" id="Q6G7H4"/>
<dbReference type="KEGG" id="sas:SAS2039"/>
<dbReference type="HOGENOM" id="CLU_025040_0_1_9"/>
<dbReference type="GO" id="GO:0005829">
    <property type="term" value="C:cytosol"/>
    <property type="evidence" value="ECO:0007669"/>
    <property type="project" value="TreeGrafter"/>
</dbReference>
<dbReference type="GO" id="GO:0004645">
    <property type="term" value="F:1,4-alpha-oligoglucan phosphorylase activity"/>
    <property type="evidence" value="ECO:0007669"/>
    <property type="project" value="InterPro"/>
</dbReference>
<dbReference type="GO" id="GO:0047847">
    <property type="term" value="F:deoxyuridine phosphorylase activity"/>
    <property type="evidence" value="ECO:0007669"/>
    <property type="project" value="RHEA"/>
</dbReference>
<dbReference type="GO" id="GO:0046872">
    <property type="term" value="F:metal ion binding"/>
    <property type="evidence" value="ECO:0007669"/>
    <property type="project" value="UniProtKB-KW"/>
</dbReference>
<dbReference type="GO" id="GO:0009032">
    <property type="term" value="F:thymidine phosphorylase activity"/>
    <property type="evidence" value="ECO:0007669"/>
    <property type="project" value="TreeGrafter"/>
</dbReference>
<dbReference type="GO" id="GO:0004850">
    <property type="term" value="F:uridine phosphorylase activity"/>
    <property type="evidence" value="ECO:0007669"/>
    <property type="project" value="RHEA"/>
</dbReference>
<dbReference type="GO" id="GO:0006206">
    <property type="term" value="P:pyrimidine nucleobase metabolic process"/>
    <property type="evidence" value="ECO:0007669"/>
    <property type="project" value="InterPro"/>
</dbReference>
<dbReference type="GO" id="GO:0006213">
    <property type="term" value="P:pyrimidine nucleoside metabolic process"/>
    <property type="evidence" value="ECO:0007669"/>
    <property type="project" value="InterPro"/>
</dbReference>
<dbReference type="FunFam" id="1.20.970.10:FF:000002">
    <property type="entry name" value="Pyrimidine-nucleoside phosphorylase"/>
    <property type="match status" value="1"/>
</dbReference>
<dbReference type="FunFam" id="3.40.1030.10:FF:000003">
    <property type="entry name" value="Pyrimidine-nucleoside phosphorylase"/>
    <property type="match status" value="1"/>
</dbReference>
<dbReference type="Gene3D" id="3.40.1030.10">
    <property type="entry name" value="Nucleoside phosphorylase/phosphoribosyltransferase catalytic domain"/>
    <property type="match status" value="1"/>
</dbReference>
<dbReference type="Gene3D" id="3.90.1170.30">
    <property type="entry name" value="Pyrimidine nucleoside phosphorylase-like, C-terminal domain"/>
    <property type="match status" value="1"/>
</dbReference>
<dbReference type="Gene3D" id="1.20.970.10">
    <property type="entry name" value="Transferase, Pyrimidine Nucleoside Phosphorylase, Chain C"/>
    <property type="match status" value="1"/>
</dbReference>
<dbReference type="InterPro" id="IPR000312">
    <property type="entry name" value="Glycosyl_Trfase_fam3"/>
</dbReference>
<dbReference type="InterPro" id="IPR017459">
    <property type="entry name" value="Glycosyl_Trfase_fam3_N_dom"/>
</dbReference>
<dbReference type="InterPro" id="IPR036320">
    <property type="entry name" value="Glycosyl_Trfase_fam3_N_dom_sf"/>
</dbReference>
<dbReference type="InterPro" id="IPR035902">
    <property type="entry name" value="Nuc_phospho_transferase"/>
</dbReference>
<dbReference type="InterPro" id="IPR036566">
    <property type="entry name" value="PYNP-like_C_sf"/>
</dbReference>
<dbReference type="InterPro" id="IPR013102">
    <property type="entry name" value="PYNP_C"/>
</dbReference>
<dbReference type="InterPro" id="IPR018090">
    <property type="entry name" value="Pyrmidine_PPas_bac/euk"/>
</dbReference>
<dbReference type="InterPro" id="IPR017872">
    <property type="entry name" value="Pyrmidine_PPase_CS"/>
</dbReference>
<dbReference type="InterPro" id="IPR000053">
    <property type="entry name" value="Thymidine/pyrmidine_PPase"/>
</dbReference>
<dbReference type="NCBIfam" id="NF004490">
    <property type="entry name" value="PRK05820.1"/>
    <property type="match status" value="1"/>
</dbReference>
<dbReference type="NCBIfam" id="NF004747">
    <property type="entry name" value="PRK06078.1"/>
    <property type="match status" value="1"/>
</dbReference>
<dbReference type="NCBIfam" id="TIGR02644">
    <property type="entry name" value="Y_phosphoryl"/>
    <property type="match status" value="1"/>
</dbReference>
<dbReference type="PANTHER" id="PTHR10515">
    <property type="entry name" value="THYMIDINE PHOSPHORYLASE"/>
    <property type="match status" value="1"/>
</dbReference>
<dbReference type="PANTHER" id="PTHR10515:SF0">
    <property type="entry name" value="THYMIDINE PHOSPHORYLASE"/>
    <property type="match status" value="1"/>
</dbReference>
<dbReference type="Pfam" id="PF02885">
    <property type="entry name" value="Glycos_trans_3N"/>
    <property type="match status" value="1"/>
</dbReference>
<dbReference type="Pfam" id="PF00591">
    <property type="entry name" value="Glycos_transf_3"/>
    <property type="match status" value="1"/>
</dbReference>
<dbReference type="Pfam" id="PF07831">
    <property type="entry name" value="PYNP_C"/>
    <property type="match status" value="1"/>
</dbReference>
<dbReference type="PIRSF" id="PIRSF000478">
    <property type="entry name" value="TP_PyNP"/>
    <property type="match status" value="1"/>
</dbReference>
<dbReference type="SMART" id="SM00941">
    <property type="entry name" value="PYNP_C"/>
    <property type="match status" value="1"/>
</dbReference>
<dbReference type="SUPFAM" id="SSF52418">
    <property type="entry name" value="Nucleoside phosphorylase/phosphoribosyltransferase catalytic domain"/>
    <property type="match status" value="1"/>
</dbReference>
<dbReference type="SUPFAM" id="SSF47648">
    <property type="entry name" value="Nucleoside phosphorylase/phosphoribosyltransferase N-terminal domain"/>
    <property type="match status" value="1"/>
</dbReference>
<dbReference type="SUPFAM" id="SSF54680">
    <property type="entry name" value="Pyrimidine nucleoside phosphorylase C-terminal domain"/>
    <property type="match status" value="1"/>
</dbReference>
<dbReference type="PROSITE" id="PS00647">
    <property type="entry name" value="THYMID_PHOSPHORYLASE"/>
    <property type="match status" value="1"/>
</dbReference>
<comment type="function">
    <text evidence="1">Catalyzes phosphorolysis of the pyrimidine nucleosides uridine, thymidine and 2'-deoxyuridine with the formation of the corresponding pyrimidine base and ribose-1-phosphate.</text>
</comment>
<comment type="catalytic activity">
    <reaction evidence="1">
        <text>uridine + phosphate = alpha-D-ribose 1-phosphate + uracil</text>
        <dbReference type="Rhea" id="RHEA:24388"/>
        <dbReference type="ChEBI" id="CHEBI:16704"/>
        <dbReference type="ChEBI" id="CHEBI:17568"/>
        <dbReference type="ChEBI" id="CHEBI:43474"/>
        <dbReference type="ChEBI" id="CHEBI:57720"/>
        <dbReference type="EC" id="2.4.2.2"/>
    </reaction>
</comment>
<comment type="catalytic activity">
    <reaction evidence="1">
        <text>thymidine + phosphate = 2-deoxy-alpha-D-ribose 1-phosphate + thymine</text>
        <dbReference type="Rhea" id="RHEA:16037"/>
        <dbReference type="ChEBI" id="CHEBI:17748"/>
        <dbReference type="ChEBI" id="CHEBI:17821"/>
        <dbReference type="ChEBI" id="CHEBI:43474"/>
        <dbReference type="ChEBI" id="CHEBI:57259"/>
        <dbReference type="EC" id="2.4.2.2"/>
    </reaction>
</comment>
<comment type="catalytic activity">
    <reaction evidence="1">
        <text>2'-deoxyuridine + phosphate = 2-deoxy-alpha-D-ribose 1-phosphate + uracil</text>
        <dbReference type="Rhea" id="RHEA:22824"/>
        <dbReference type="ChEBI" id="CHEBI:16450"/>
        <dbReference type="ChEBI" id="CHEBI:17568"/>
        <dbReference type="ChEBI" id="CHEBI:43474"/>
        <dbReference type="ChEBI" id="CHEBI:57259"/>
        <dbReference type="EC" id="2.4.2.2"/>
    </reaction>
</comment>
<comment type="cofactor">
    <cofactor evidence="1">
        <name>K(+)</name>
        <dbReference type="ChEBI" id="CHEBI:29103"/>
    </cofactor>
    <text evidence="1">Binds 1 K(+) ion per subunit.</text>
</comment>
<comment type="subunit">
    <text evidence="1">Homodimer.</text>
</comment>
<comment type="similarity">
    <text evidence="2">Belongs to the thymidine/pyrimidine-nucleoside phosphorylase family.</text>
</comment>
<evidence type="ECO:0000250" key="1">
    <source>
        <dbReference type="UniProtKB" id="P77836"/>
    </source>
</evidence>
<evidence type="ECO:0000305" key="2"/>
<protein>
    <recommendedName>
        <fullName>Pyrimidine-nucleoside phosphorylase</fullName>
        <shortName>PYNP</shortName>
        <shortName>Py-NPase</shortName>
        <ecNumber>2.4.2.2</ecNumber>
    </recommendedName>
</protein>
<reference key="1">
    <citation type="journal article" date="2004" name="Proc. Natl. Acad. Sci. U.S.A.">
        <title>Complete genomes of two clinical Staphylococcus aureus strains: evidence for the rapid evolution of virulence and drug resistance.</title>
        <authorList>
            <person name="Holden M.T.G."/>
            <person name="Feil E.J."/>
            <person name="Lindsay J.A."/>
            <person name="Peacock S.J."/>
            <person name="Day N.P.J."/>
            <person name="Enright M.C."/>
            <person name="Foster T.J."/>
            <person name="Moore C.E."/>
            <person name="Hurst L."/>
            <person name="Atkin R."/>
            <person name="Barron A."/>
            <person name="Bason N."/>
            <person name="Bentley S.D."/>
            <person name="Chillingworth C."/>
            <person name="Chillingworth T."/>
            <person name="Churcher C."/>
            <person name="Clark L."/>
            <person name="Corton C."/>
            <person name="Cronin A."/>
            <person name="Doggett J."/>
            <person name="Dowd L."/>
            <person name="Feltwell T."/>
            <person name="Hance Z."/>
            <person name="Harris B."/>
            <person name="Hauser H."/>
            <person name="Holroyd S."/>
            <person name="Jagels K."/>
            <person name="James K.D."/>
            <person name="Lennard N."/>
            <person name="Line A."/>
            <person name="Mayes R."/>
            <person name="Moule S."/>
            <person name="Mungall K."/>
            <person name="Ormond D."/>
            <person name="Quail M.A."/>
            <person name="Rabbinowitsch E."/>
            <person name="Rutherford K.M."/>
            <person name="Sanders M."/>
            <person name="Sharp S."/>
            <person name="Simmonds M."/>
            <person name="Stevens K."/>
            <person name="Whitehead S."/>
            <person name="Barrell B.G."/>
            <person name="Spratt B.G."/>
            <person name="Parkhill J."/>
        </authorList>
    </citation>
    <scope>NUCLEOTIDE SEQUENCE [LARGE SCALE GENOMIC DNA]</scope>
    <source>
        <strain>MSSA476</strain>
    </source>
</reference>
<sequence>MRMIDIIEKKRDGHTLTTEEINFFIDGYVKGDIPDYQASSLAMAIYFQDMNDDERAALTMAMVNSGDMIDLSDIKGVKVDKHSTGGVGDTTTLVLAPLVAAVDVPVAKMSGRGLGHTGGTIDKLEAIDGFHVEIDEATFVKLVNENKVAVVGQSGNLTPADKKLYALRDVTGTVNSIPLIASSIMSKKIAAGADAIVLDVKTGSGAFMKTLEDAEALAHAMVRIGNNVGRNTMAIISDMNQPLGRAIGNALELQEAIDTLKGQGPKDLTELVLTLGSQMVVLANKAETLEEARALLIEAINSGAALEKFKTFIKNQGGDETVIDHPERLPQAQYQIEYKAKKSGYVTELVSNDIGVASMMLGAGRLTKEDDIDLAVGIVLNKKIGDKVEEGESLLTIHSNRQDVDDVVKKLDSSITIADHVVSPTLIHKIIIE</sequence>
<organism>
    <name type="scientific">Staphylococcus aureus (strain MSSA476)</name>
    <dbReference type="NCBI Taxonomy" id="282459"/>
    <lineage>
        <taxon>Bacteria</taxon>
        <taxon>Bacillati</taxon>
        <taxon>Bacillota</taxon>
        <taxon>Bacilli</taxon>
        <taxon>Bacillales</taxon>
        <taxon>Staphylococcaceae</taxon>
        <taxon>Staphylococcus</taxon>
    </lineage>
</organism>
<accession>Q6G7H4</accession>
<gene>
    <name type="primary">pdp</name>
    <name type="synonym">pyn</name>
    <name type="ordered locus">SAS2039</name>
</gene>
<keyword id="KW-0328">Glycosyltransferase</keyword>
<keyword id="KW-0479">Metal-binding</keyword>
<keyword id="KW-0630">Potassium</keyword>
<keyword id="KW-0808">Transferase</keyword>